<gene>
    <name evidence="1" type="primary">hflD</name>
    <name type="ordered locus">SF1151</name>
    <name type="ordered locus">S1234</name>
</gene>
<feature type="chain" id="PRO_0000071589" description="High frequency lysogenization protein HflD homolog">
    <location>
        <begin position="1"/>
        <end position="213"/>
    </location>
</feature>
<feature type="coiled-coil region" evidence="1">
    <location>
        <begin position="79"/>
        <end position="126"/>
    </location>
</feature>
<keyword id="KW-0997">Cell inner membrane</keyword>
<keyword id="KW-1003">Cell membrane</keyword>
<keyword id="KW-0175">Coiled coil</keyword>
<keyword id="KW-0963">Cytoplasm</keyword>
<keyword id="KW-0472">Membrane</keyword>
<keyword id="KW-1185">Reference proteome</keyword>
<accession>Q83LF8</accession>
<organism>
    <name type="scientific">Shigella flexneri</name>
    <dbReference type="NCBI Taxonomy" id="623"/>
    <lineage>
        <taxon>Bacteria</taxon>
        <taxon>Pseudomonadati</taxon>
        <taxon>Pseudomonadota</taxon>
        <taxon>Gammaproteobacteria</taxon>
        <taxon>Enterobacterales</taxon>
        <taxon>Enterobacteriaceae</taxon>
        <taxon>Shigella</taxon>
    </lineage>
</organism>
<proteinExistence type="inferred from homology"/>
<reference key="1">
    <citation type="journal article" date="2002" name="Nucleic Acids Res.">
        <title>Genome sequence of Shigella flexneri 2a: insights into pathogenicity through comparison with genomes of Escherichia coli K12 and O157.</title>
        <authorList>
            <person name="Jin Q."/>
            <person name="Yuan Z."/>
            <person name="Xu J."/>
            <person name="Wang Y."/>
            <person name="Shen Y."/>
            <person name="Lu W."/>
            <person name="Wang J."/>
            <person name="Liu H."/>
            <person name="Yang J."/>
            <person name="Yang F."/>
            <person name="Zhang X."/>
            <person name="Zhang J."/>
            <person name="Yang G."/>
            <person name="Wu H."/>
            <person name="Qu D."/>
            <person name="Dong J."/>
            <person name="Sun L."/>
            <person name="Xue Y."/>
            <person name="Zhao A."/>
            <person name="Gao Y."/>
            <person name="Zhu J."/>
            <person name="Kan B."/>
            <person name="Ding K."/>
            <person name="Chen S."/>
            <person name="Cheng H."/>
            <person name="Yao Z."/>
            <person name="He B."/>
            <person name="Chen R."/>
            <person name="Ma D."/>
            <person name="Qiang B."/>
            <person name="Wen Y."/>
            <person name="Hou Y."/>
            <person name="Yu J."/>
        </authorList>
    </citation>
    <scope>NUCLEOTIDE SEQUENCE [LARGE SCALE GENOMIC DNA]</scope>
    <source>
        <strain>301 / Serotype 2a</strain>
    </source>
</reference>
<reference key="2">
    <citation type="journal article" date="2003" name="Infect. Immun.">
        <title>Complete genome sequence and comparative genomics of Shigella flexneri serotype 2a strain 2457T.</title>
        <authorList>
            <person name="Wei J."/>
            <person name="Goldberg M.B."/>
            <person name="Burland V."/>
            <person name="Venkatesan M.M."/>
            <person name="Deng W."/>
            <person name="Fournier G."/>
            <person name="Mayhew G.F."/>
            <person name="Plunkett G. III"/>
            <person name="Rose D.J."/>
            <person name="Darling A."/>
            <person name="Mau B."/>
            <person name="Perna N.T."/>
            <person name="Payne S.M."/>
            <person name="Runyen-Janecky L.J."/>
            <person name="Zhou S."/>
            <person name="Schwartz D.C."/>
            <person name="Blattner F.R."/>
        </authorList>
    </citation>
    <scope>NUCLEOTIDE SEQUENCE [LARGE SCALE GENOMIC DNA]</scope>
    <source>
        <strain>ATCC 700930 / 2457T / Serotype 2a</strain>
    </source>
</reference>
<dbReference type="EMBL" id="AE005674">
    <property type="protein sequence ID" value="AAN42768.2"/>
    <property type="molecule type" value="Genomic_DNA"/>
</dbReference>
<dbReference type="EMBL" id="AE014073">
    <property type="protein sequence ID" value="AAP16657.1"/>
    <property type="molecule type" value="Genomic_DNA"/>
</dbReference>
<dbReference type="RefSeq" id="WP_005047980.1">
    <property type="nucleotide sequence ID" value="NZ_WPGW01000001.1"/>
</dbReference>
<dbReference type="SMR" id="Q83LF8"/>
<dbReference type="STRING" id="198214.SF1151"/>
<dbReference type="PaxDb" id="198214-SF1151"/>
<dbReference type="KEGG" id="sfl:SF1151"/>
<dbReference type="KEGG" id="sfx:S1234"/>
<dbReference type="PATRIC" id="fig|198214.7.peg.1352"/>
<dbReference type="HOGENOM" id="CLU_098920_0_0_6"/>
<dbReference type="Proteomes" id="UP000001006">
    <property type="component" value="Chromosome"/>
</dbReference>
<dbReference type="Proteomes" id="UP000002673">
    <property type="component" value="Chromosome"/>
</dbReference>
<dbReference type="GO" id="GO:0005737">
    <property type="term" value="C:cytoplasm"/>
    <property type="evidence" value="ECO:0007669"/>
    <property type="project" value="UniProtKB-SubCell"/>
</dbReference>
<dbReference type="GO" id="GO:0005886">
    <property type="term" value="C:plasma membrane"/>
    <property type="evidence" value="ECO:0007669"/>
    <property type="project" value="UniProtKB-SubCell"/>
</dbReference>
<dbReference type="FunFam" id="1.10.3890.10:FF:000001">
    <property type="entry name" value="High frequency lysogenization protein HflD homolog"/>
    <property type="match status" value="1"/>
</dbReference>
<dbReference type="Gene3D" id="1.10.3890.10">
    <property type="entry name" value="HflD-like"/>
    <property type="match status" value="1"/>
</dbReference>
<dbReference type="HAMAP" id="MF_00695">
    <property type="entry name" value="HflD_protein"/>
    <property type="match status" value="1"/>
</dbReference>
<dbReference type="InterPro" id="IPR007451">
    <property type="entry name" value="HflD"/>
</dbReference>
<dbReference type="InterPro" id="IPR035932">
    <property type="entry name" value="HflD-like_sf"/>
</dbReference>
<dbReference type="NCBIfam" id="NF001245">
    <property type="entry name" value="PRK00218.1-1"/>
    <property type="match status" value="1"/>
</dbReference>
<dbReference type="NCBIfam" id="NF001246">
    <property type="entry name" value="PRK00218.1-2"/>
    <property type="match status" value="1"/>
</dbReference>
<dbReference type="NCBIfam" id="NF001248">
    <property type="entry name" value="PRK00218.1-4"/>
    <property type="match status" value="1"/>
</dbReference>
<dbReference type="NCBIfam" id="NF001249">
    <property type="entry name" value="PRK00218.1-5"/>
    <property type="match status" value="1"/>
</dbReference>
<dbReference type="PANTHER" id="PTHR38100">
    <property type="entry name" value="HIGH FREQUENCY LYSOGENIZATION PROTEIN HFLD"/>
    <property type="match status" value="1"/>
</dbReference>
<dbReference type="PANTHER" id="PTHR38100:SF1">
    <property type="entry name" value="HIGH FREQUENCY LYSOGENIZATION PROTEIN HFLD"/>
    <property type="match status" value="1"/>
</dbReference>
<dbReference type="Pfam" id="PF04356">
    <property type="entry name" value="DUF489"/>
    <property type="match status" value="1"/>
</dbReference>
<dbReference type="SUPFAM" id="SSF101322">
    <property type="entry name" value="YcfC-like"/>
    <property type="match status" value="1"/>
</dbReference>
<evidence type="ECO:0000255" key="1">
    <source>
        <dbReference type="HAMAP-Rule" id="MF_00695"/>
    </source>
</evidence>
<comment type="subcellular location">
    <subcellularLocation>
        <location>Cytoplasm</location>
    </subcellularLocation>
    <subcellularLocation>
        <location evidence="1">Cell inner membrane</location>
        <topology evidence="1">Peripheral membrane protein</topology>
        <orientation evidence="1">Cytoplasmic side</orientation>
    </subcellularLocation>
</comment>
<comment type="similarity">
    <text evidence="1">Belongs to the HflD family.</text>
</comment>
<name>HFLD_SHIFL</name>
<sequence>MAKNYYDITLALAGICQSARLVQQLAHQGHCDADALHVSLNSIIDMNPSSTLAVFGGSEANLRVGLETLLGVLNASSCQGLNAELTRYTLSLMVLERKLSSAKGALDTLGNRINGLQRQLEHFDLQSETLMSAMAAIYVDVISPLGPRIQVTGSPAVLQSPQVQAKVRATLLAGIRAAVLWHQVGGGRLQLMFSRNRLTTQAKQILAHLTPEL</sequence>
<protein>
    <recommendedName>
        <fullName evidence="1">High frequency lysogenization protein HflD homolog</fullName>
    </recommendedName>
</protein>